<sequence>MYKRYKDVSLILKIVIGIIVGAVLGVMVPSWSFIDVLGKLFVGALKAIAPLLVFLLIMSAISKYRSGAKNHFGTVIVLYLSATLFSSIAAVAVSYLFPIKLVLPGAMKIAESAPKDLGTVVTSLLTNAVANPISALVEGNYLAILFWSLLIGSGLRLTSAVTKKVVTELADTVSAVAQNVIQFAPFGIVGLLHESLSKTGVKGVMAYGQLLMLLVATMVFVYLVVYPFMVWLMTRQNPYPLTFWTLKVSGIPAFFTRSGAVNIPINLKASKDLGLNEESYAISIPLGGSANSGGAAITVSIMTLATANTMGVHVSIFLALLLCFLSAISATGVSGIAGGSLLLIPMAASLFGISNDIAMQVVGIGFIIGVVQDSVETAVNSASDLLFTATAEYADDRREGHPVDIRAKVKAAGKGTAEVVTPEKANEAEESEQV</sequence>
<comment type="function">
    <text evidence="1">Involved in the import of serine and threonine into the cell, with the concomitant import of sodium (symport system).</text>
</comment>
<comment type="catalytic activity">
    <reaction evidence="1">
        <text>L-serine(in) + Na(+)(in) = L-serine(out) + Na(+)(out)</text>
        <dbReference type="Rhea" id="RHEA:29575"/>
        <dbReference type="ChEBI" id="CHEBI:29101"/>
        <dbReference type="ChEBI" id="CHEBI:33384"/>
    </reaction>
    <physiologicalReaction direction="right-to-left" evidence="1">
        <dbReference type="Rhea" id="RHEA:29577"/>
    </physiologicalReaction>
</comment>
<comment type="catalytic activity">
    <reaction evidence="1">
        <text>L-threonine(in) + Na(+)(in) = L-threonine(out) + Na(+)(out)</text>
        <dbReference type="Rhea" id="RHEA:69999"/>
        <dbReference type="ChEBI" id="CHEBI:29101"/>
        <dbReference type="ChEBI" id="CHEBI:57926"/>
    </reaction>
    <physiologicalReaction direction="right-to-left" evidence="1">
        <dbReference type="Rhea" id="RHEA:70001"/>
    </physiologicalReaction>
</comment>
<comment type="subcellular location">
    <subcellularLocation>
        <location evidence="1">Cell membrane</location>
        <topology evidence="1">Multi-pass membrane protein</topology>
    </subcellularLocation>
</comment>
<comment type="similarity">
    <text evidence="1">Belongs to the dicarboxylate/amino acid:cation symporter (DAACS) (TC 2.A.23) family.</text>
</comment>
<dbReference type="EMBL" id="CP000423">
    <property type="protein sequence ID" value="ABJ69474.1"/>
    <property type="molecule type" value="Genomic_DNA"/>
</dbReference>
<dbReference type="RefSeq" id="WP_003563595.1">
    <property type="nucleotide sequence ID" value="NC_008526.1"/>
</dbReference>
<dbReference type="RefSeq" id="YP_805916.1">
    <property type="nucleotide sequence ID" value="NC_008526.1"/>
</dbReference>
<dbReference type="SMR" id="Q03BE8"/>
<dbReference type="PaxDb" id="321967-LSEI_0632"/>
<dbReference type="GeneID" id="57089251"/>
<dbReference type="KEGG" id="lca:LSEI_0632"/>
<dbReference type="PATRIC" id="fig|321967.11.peg.633"/>
<dbReference type="HOGENOM" id="CLU_044581_0_0_9"/>
<dbReference type="Proteomes" id="UP000001651">
    <property type="component" value="Chromosome"/>
</dbReference>
<dbReference type="GO" id="GO:0005886">
    <property type="term" value="C:plasma membrane"/>
    <property type="evidence" value="ECO:0007669"/>
    <property type="project" value="UniProtKB-SubCell"/>
</dbReference>
<dbReference type="GO" id="GO:0015171">
    <property type="term" value="F:amino acid transmembrane transporter activity"/>
    <property type="evidence" value="ECO:0007669"/>
    <property type="project" value="UniProtKB-UniRule"/>
</dbReference>
<dbReference type="GO" id="GO:0015293">
    <property type="term" value="F:symporter activity"/>
    <property type="evidence" value="ECO:0007669"/>
    <property type="project" value="UniProtKB-UniRule"/>
</dbReference>
<dbReference type="GO" id="GO:0032329">
    <property type="term" value="P:serine transport"/>
    <property type="evidence" value="ECO:0007669"/>
    <property type="project" value="InterPro"/>
</dbReference>
<dbReference type="GO" id="GO:0015826">
    <property type="term" value="P:threonine transport"/>
    <property type="evidence" value="ECO:0007669"/>
    <property type="project" value="InterPro"/>
</dbReference>
<dbReference type="Gene3D" id="1.10.3860.10">
    <property type="entry name" value="Sodium:dicarboxylate symporter"/>
    <property type="match status" value="1"/>
</dbReference>
<dbReference type="HAMAP" id="MF_01582">
    <property type="entry name" value="Ser_Thr_transp_SstT"/>
    <property type="match status" value="1"/>
</dbReference>
<dbReference type="InterPro" id="IPR001991">
    <property type="entry name" value="Na-dicarboxylate_symporter"/>
</dbReference>
<dbReference type="InterPro" id="IPR036458">
    <property type="entry name" value="Na:dicarbo_symporter_sf"/>
</dbReference>
<dbReference type="InterPro" id="IPR023025">
    <property type="entry name" value="Ser_Thr_transp_SstT"/>
</dbReference>
<dbReference type="NCBIfam" id="NF010151">
    <property type="entry name" value="PRK13628.1"/>
    <property type="match status" value="1"/>
</dbReference>
<dbReference type="PANTHER" id="PTHR42865">
    <property type="entry name" value="PROTON/GLUTAMATE-ASPARTATE SYMPORTER"/>
    <property type="match status" value="1"/>
</dbReference>
<dbReference type="PANTHER" id="PTHR42865:SF7">
    <property type="entry name" value="PROTON_GLUTAMATE-ASPARTATE SYMPORTER"/>
    <property type="match status" value="1"/>
</dbReference>
<dbReference type="Pfam" id="PF00375">
    <property type="entry name" value="SDF"/>
    <property type="match status" value="1"/>
</dbReference>
<dbReference type="PRINTS" id="PR00173">
    <property type="entry name" value="EDTRNSPORT"/>
</dbReference>
<dbReference type="SUPFAM" id="SSF118215">
    <property type="entry name" value="Proton glutamate symport protein"/>
    <property type="match status" value="1"/>
</dbReference>
<keyword id="KW-0029">Amino-acid transport</keyword>
<keyword id="KW-1003">Cell membrane</keyword>
<keyword id="KW-0472">Membrane</keyword>
<keyword id="KW-1185">Reference proteome</keyword>
<keyword id="KW-0769">Symport</keyword>
<keyword id="KW-0812">Transmembrane</keyword>
<keyword id="KW-1133">Transmembrane helix</keyword>
<keyword id="KW-0813">Transport</keyword>
<organism>
    <name type="scientific">Lacticaseibacillus paracasei (strain ATCC 334 / BCRC 17002 / CCUG 31169 / CIP 107868 / KCTC 3260 / NRRL B-441)</name>
    <name type="common">Lactobacillus paracasei</name>
    <dbReference type="NCBI Taxonomy" id="321967"/>
    <lineage>
        <taxon>Bacteria</taxon>
        <taxon>Bacillati</taxon>
        <taxon>Bacillota</taxon>
        <taxon>Bacilli</taxon>
        <taxon>Lactobacillales</taxon>
        <taxon>Lactobacillaceae</taxon>
        <taxon>Lacticaseibacillus</taxon>
    </lineage>
</organism>
<feature type="chain" id="PRO_0000309096" description="Serine/threonine transporter SstT">
    <location>
        <begin position="1"/>
        <end position="434"/>
    </location>
</feature>
<feature type="transmembrane region" description="Helical" evidence="1">
    <location>
        <begin position="14"/>
        <end position="34"/>
    </location>
</feature>
<feature type="transmembrane region" description="Helical" evidence="1">
    <location>
        <begin position="41"/>
        <end position="61"/>
    </location>
</feature>
<feature type="transmembrane region" description="Helical" evidence="1">
    <location>
        <begin position="72"/>
        <end position="92"/>
    </location>
</feature>
<feature type="transmembrane region" description="Helical" evidence="1">
    <location>
        <begin position="135"/>
        <end position="155"/>
    </location>
</feature>
<feature type="transmembrane region" description="Helical" evidence="1">
    <location>
        <begin position="172"/>
        <end position="192"/>
    </location>
</feature>
<feature type="transmembrane region" description="Helical" evidence="1">
    <location>
        <begin position="210"/>
        <end position="230"/>
    </location>
</feature>
<feature type="transmembrane region" description="Helical" evidence="1">
    <location>
        <begin position="282"/>
        <end position="302"/>
    </location>
</feature>
<feature type="transmembrane region" description="Helical" evidence="1">
    <location>
        <begin position="316"/>
        <end position="336"/>
    </location>
</feature>
<feature type="transmembrane region" description="Helical" evidence="1">
    <location>
        <begin position="351"/>
        <end position="371"/>
    </location>
</feature>
<feature type="region of interest" description="Disordered" evidence="2">
    <location>
        <begin position="414"/>
        <end position="434"/>
    </location>
</feature>
<reference key="1">
    <citation type="journal article" date="2006" name="Proc. Natl. Acad. Sci. U.S.A.">
        <title>Comparative genomics of the lactic acid bacteria.</title>
        <authorList>
            <person name="Makarova K.S."/>
            <person name="Slesarev A."/>
            <person name="Wolf Y.I."/>
            <person name="Sorokin A."/>
            <person name="Mirkin B."/>
            <person name="Koonin E.V."/>
            <person name="Pavlov A."/>
            <person name="Pavlova N."/>
            <person name="Karamychev V."/>
            <person name="Polouchine N."/>
            <person name="Shakhova V."/>
            <person name="Grigoriev I."/>
            <person name="Lou Y."/>
            <person name="Rohksar D."/>
            <person name="Lucas S."/>
            <person name="Huang K."/>
            <person name="Goodstein D.M."/>
            <person name="Hawkins T."/>
            <person name="Plengvidhya V."/>
            <person name="Welker D."/>
            <person name="Hughes J."/>
            <person name="Goh Y."/>
            <person name="Benson A."/>
            <person name="Baldwin K."/>
            <person name="Lee J.-H."/>
            <person name="Diaz-Muniz I."/>
            <person name="Dosti B."/>
            <person name="Smeianov V."/>
            <person name="Wechter W."/>
            <person name="Barabote R."/>
            <person name="Lorca G."/>
            <person name="Altermann E."/>
            <person name="Barrangou R."/>
            <person name="Ganesan B."/>
            <person name="Xie Y."/>
            <person name="Rawsthorne H."/>
            <person name="Tamir D."/>
            <person name="Parker C."/>
            <person name="Breidt F."/>
            <person name="Broadbent J.R."/>
            <person name="Hutkins R."/>
            <person name="O'Sullivan D."/>
            <person name="Steele J."/>
            <person name="Unlu G."/>
            <person name="Saier M.H. Jr."/>
            <person name="Klaenhammer T."/>
            <person name="Richardson P."/>
            <person name="Kozyavkin S."/>
            <person name="Weimer B.C."/>
            <person name="Mills D.A."/>
        </authorList>
    </citation>
    <scope>NUCLEOTIDE SEQUENCE [LARGE SCALE GENOMIC DNA]</scope>
    <source>
        <strain>ATCC 334 / BCRC 17002 / CCUG 31169 / CIP 107868 / KCTC 3260 / NRRL B-441</strain>
    </source>
</reference>
<evidence type="ECO:0000255" key="1">
    <source>
        <dbReference type="HAMAP-Rule" id="MF_01582"/>
    </source>
</evidence>
<evidence type="ECO:0000256" key="2">
    <source>
        <dbReference type="SAM" id="MobiDB-lite"/>
    </source>
</evidence>
<gene>
    <name evidence="1" type="primary">sstT</name>
    <name type="ordered locus">LSEI_0632</name>
</gene>
<accession>Q03BE8</accession>
<proteinExistence type="inferred from homology"/>
<name>SSTT_LACP3</name>
<protein>
    <recommendedName>
        <fullName evidence="1">Serine/threonine transporter SstT</fullName>
    </recommendedName>
    <alternativeName>
        <fullName evidence="1">Na(+)/serine-threonine symporter</fullName>
    </alternativeName>
</protein>